<reference key="1">
    <citation type="submission" date="2005-10" db="EMBL/GenBank/DDBJ databases">
        <title>Complete sequence of chromosome 1 of Burkholderia sp. 383.</title>
        <authorList>
            <consortium name="US DOE Joint Genome Institute"/>
            <person name="Copeland A."/>
            <person name="Lucas S."/>
            <person name="Lapidus A."/>
            <person name="Barry K."/>
            <person name="Detter J.C."/>
            <person name="Glavina T."/>
            <person name="Hammon N."/>
            <person name="Israni S."/>
            <person name="Pitluck S."/>
            <person name="Chain P."/>
            <person name="Malfatti S."/>
            <person name="Shin M."/>
            <person name="Vergez L."/>
            <person name="Schmutz J."/>
            <person name="Larimer F."/>
            <person name="Land M."/>
            <person name="Kyrpides N."/>
            <person name="Lykidis A."/>
            <person name="Richardson P."/>
        </authorList>
    </citation>
    <scope>NUCLEOTIDE SEQUENCE [LARGE SCALE GENOMIC DNA]</scope>
    <source>
        <strain>ATCC 17760 / DSM 23089 / LMG 22485 / NCIMB 9086 / R18194 / 383</strain>
    </source>
</reference>
<proteinExistence type="inferred from homology"/>
<gene>
    <name evidence="1" type="primary">leuA</name>
    <name type="ordered locus">Bcep18194_A5587</name>
</gene>
<keyword id="KW-0028">Amino-acid biosynthesis</keyword>
<keyword id="KW-0100">Branched-chain amino acid biosynthesis</keyword>
<keyword id="KW-0963">Cytoplasm</keyword>
<keyword id="KW-0432">Leucine biosynthesis</keyword>
<keyword id="KW-0464">Manganese</keyword>
<keyword id="KW-0479">Metal-binding</keyword>
<keyword id="KW-0808">Transferase</keyword>
<organism>
    <name type="scientific">Burkholderia lata (strain ATCC 17760 / DSM 23089 / LMG 22485 / NCIMB 9086 / R18194 / 383)</name>
    <dbReference type="NCBI Taxonomy" id="482957"/>
    <lineage>
        <taxon>Bacteria</taxon>
        <taxon>Pseudomonadati</taxon>
        <taxon>Pseudomonadota</taxon>
        <taxon>Betaproteobacteria</taxon>
        <taxon>Burkholderiales</taxon>
        <taxon>Burkholderiaceae</taxon>
        <taxon>Burkholderia</taxon>
        <taxon>Burkholderia cepacia complex</taxon>
    </lineage>
</organism>
<feature type="chain" id="PRO_1000149156" description="2-isopropylmalate synthase">
    <location>
        <begin position="1"/>
        <end position="514"/>
    </location>
</feature>
<feature type="domain" description="Pyruvate carboxyltransferase" evidence="1">
    <location>
        <begin position="5"/>
        <end position="268"/>
    </location>
</feature>
<feature type="region of interest" description="Regulatory domain" evidence="1">
    <location>
        <begin position="395"/>
        <end position="514"/>
    </location>
</feature>
<feature type="binding site" evidence="1">
    <location>
        <position position="14"/>
    </location>
    <ligand>
        <name>Mn(2+)</name>
        <dbReference type="ChEBI" id="CHEBI:29035"/>
    </ligand>
</feature>
<feature type="binding site" evidence="1">
    <location>
        <position position="202"/>
    </location>
    <ligand>
        <name>Mn(2+)</name>
        <dbReference type="ChEBI" id="CHEBI:29035"/>
    </ligand>
</feature>
<feature type="binding site" evidence="1">
    <location>
        <position position="204"/>
    </location>
    <ligand>
        <name>Mn(2+)</name>
        <dbReference type="ChEBI" id="CHEBI:29035"/>
    </ligand>
</feature>
<feature type="binding site" evidence="1">
    <location>
        <position position="239"/>
    </location>
    <ligand>
        <name>Mn(2+)</name>
        <dbReference type="ChEBI" id="CHEBI:29035"/>
    </ligand>
</feature>
<sequence>MTDKLIIFDTTLRDGEQSPGASMTKEEKIRIAKHLERMKVDVIEAGFAASSNGDFDAIHTIAGLIKDSTICSLARANDKDIQRAADALKPAESFRIHTFIATSPLHMEKKLRMTPDQVFEQARLAVRFARKFTDNVEFSPEDGSRSDMDFLCRVLEAVIAEGATTINIADTVGYGVPELYGNLVKTLRERIPNSDKAIFSVHCHNDLGMAVANSLAGVKIGGARQIECTINGLGERAGNTSLEEIVMAVKTRKDYFGLDVGIDTSQIVPTSKLVSQITGFVVQPNKAVVGANAFAHASGIHQDGVLKARDTYEIMRAEDVGWTANKIVLGKLSGRNAFKQRLQELGVSLDSESELNAAFMRFKDLADRKAEIFDEDIIAIVSEESALAHEQEHFKFVSLSQHSETGEQPHAKVVFGVEGKEVTGEARGNGPVDATFNAIESEVGSGSELLLYSVNAITTGTQAQGEVTVRLSKSGRIVNGVGTDPDIVAASAKAYISALNKLHSKDDKVNPQRS</sequence>
<name>LEU1_BURL3</name>
<accession>Q39ED5</accession>
<evidence type="ECO:0000255" key="1">
    <source>
        <dbReference type="HAMAP-Rule" id="MF_01025"/>
    </source>
</evidence>
<dbReference type="EC" id="2.3.3.13" evidence="1"/>
<dbReference type="EMBL" id="CP000151">
    <property type="protein sequence ID" value="ABB09181.1"/>
    <property type="molecule type" value="Genomic_DNA"/>
</dbReference>
<dbReference type="RefSeq" id="WP_011352708.1">
    <property type="nucleotide sequence ID" value="NC_007510.1"/>
</dbReference>
<dbReference type="SMR" id="Q39ED5"/>
<dbReference type="GeneID" id="45095474"/>
<dbReference type="KEGG" id="bur:Bcep18194_A5587"/>
<dbReference type="PATRIC" id="fig|482957.22.peg.2553"/>
<dbReference type="HOGENOM" id="CLU_022158_0_1_4"/>
<dbReference type="UniPathway" id="UPA00048">
    <property type="reaction ID" value="UER00070"/>
</dbReference>
<dbReference type="Proteomes" id="UP000002705">
    <property type="component" value="Chromosome 1"/>
</dbReference>
<dbReference type="GO" id="GO:0005829">
    <property type="term" value="C:cytosol"/>
    <property type="evidence" value="ECO:0007669"/>
    <property type="project" value="TreeGrafter"/>
</dbReference>
<dbReference type="GO" id="GO:0003852">
    <property type="term" value="F:2-isopropylmalate synthase activity"/>
    <property type="evidence" value="ECO:0007669"/>
    <property type="project" value="UniProtKB-UniRule"/>
</dbReference>
<dbReference type="GO" id="GO:0003985">
    <property type="term" value="F:acetyl-CoA C-acetyltransferase activity"/>
    <property type="evidence" value="ECO:0007669"/>
    <property type="project" value="UniProtKB-UniRule"/>
</dbReference>
<dbReference type="GO" id="GO:0030145">
    <property type="term" value="F:manganese ion binding"/>
    <property type="evidence" value="ECO:0007669"/>
    <property type="project" value="UniProtKB-UniRule"/>
</dbReference>
<dbReference type="GO" id="GO:0009098">
    <property type="term" value="P:L-leucine biosynthetic process"/>
    <property type="evidence" value="ECO:0007669"/>
    <property type="project" value="UniProtKB-UniRule"/>
</dbReference>
<dbReference type="CDD" id="cd07940">
    <property type="entry name" value="DRE_TIM_IPMS"/>
    <property type="match status" value="1"/>
</dbReference>
<dbReference type="FunFam" id="1.10.238.260:FF:000001">
    <property type="entry name" value="2-isopropylmalate synthase"/>
    <property type="match status" value="1"/>
</dbReference>
<dbReference type="FunFam" id="3.20.20.70:FF:000010">
    <property type="entry name" value="2-isopropylmalate synthase"/>
    <property type="match status" value="1"/>
</dbReference>
<dbReference type="FunFam" id="3.30.160.270:FF:000003">
    <property type="entry name" value="2-isopropylmalate synthase"/>
    <property type="match status" value="1"/>
</dbReference>
<dbReference type="Gene3D" id="1.10.238.260">
    <property type="match status" value="1"/>
</dbReference>
<dbReference type="Gene3D" id="3.30.160.270">
    <property type="match status" value="1"/>
</dbReference>
<dbReference type="Gene3D" id="3.20.20.70">
    <property type="entry name" value="Aldolase class I"/>
    <property type="match status" value="1"/>
</dbReference>
<dbReference type="HAMAP" id="MF_01025">
    <property type="entry name" value="LeuA_type1"/>
    <property type="match status" value="1"/>
</dbReference>
<dbReference type="InterPro" id="IPR050073">
    <property type="entry name" value="2-IPM_HCS-like"/>
</dbReference>
<dbReference type="InterPro" id="IPR013709">
    <property type="entry name" value="2-isopropylmalate_synth_dimer"/>
</dbReference>
<dbReference type="InterPro" id="IPR002034">
    <property type="entry name" value="AIPM/Hcit_synth_CS"/>
</dbReference>
<dbReference type="InterPro" id="IPR013785">
    <property type="entry name" value="Aldolase_TIM"/>
</dbReference>
<dbReference type="InterPro" id="IPR054691">
    <property type="entry name" value="LeuA/HCS_post-cat"/>
</dbReference>
<dbReference type="InterPro" id="IPR036230">
    <property type="entry name" value="LeuA_allosteric_dom_sf"/>
</dbReference>
<dbReference type="InterPro" id="IPR005671">
    <property type="entry name" value="LeuA_bact_synth"/>
</dbReference>
<dbReference type="InterPro" id="IPR000891">
    <property type="entry name" value="PYR_CT"/>
</dbReference>
<dbReference type="NCBIfam" id="TIGR00973">
    <property type="entry name" value="leuA_bact"/>
    <property type="match status" value="1"/>
</dbReference>
<dbReference type="NCBIfam" id="NF002086">
    <property type="entry name" value="PRK00915.1-3"/>
    <property type="match status" value="1"/>
</dbReference>
<dbReference type="NCBIfam" id="NF002087">
    <property type="entry name" value="PRK00915.1-4"/>
    <property type="match status" value="1"/>
</dbReference>
<dbReference type="PANTHER" id="PTHR10277:SF9">
    <property type="entry name" value="2-ISOPROPYLMALATE SYNTHASE 1, CHLOROPLASTIC-RELATED"/>
    <property type="match status" value="1"/>
</dbReference>
<dbReference type="PANTHER" id="PTHR10277">
    <property type="entry name" value="HOMOCITRATE SYNTHASE-RELATED"/>
    <property type="match status" value="1"/>
</dbReference>
<dbReference type="Pfam" id="PF22617">
    <property type="entry name" value="HCS_D2"/>
    <property type="match status" value="1"/>
</dbReference>
<dbReference type="Pfam" id="PF00682">
    <property type="entry name" value="HMGL-like"/>
    <property type="match status" value="1"/>
</dbReference>
<dbReference type="Pfam" id="PF08502">
    <property type="entry name" value="LeuA_dimer"/>
    <property type="match status" value="1"/>
</dbReference>
<dbReference type="SMART" id="SM00917">
    <property type="entry name" value="LeuA_dimer"/>
    <property type="match status" value="1"/>
</dbReference>
<dbReference type="SUPFAM" id="SSF110921">
    <property type="entry name" value="2-isopropylmalate synthase LeuA, allosteric (dimerisation) domain"/>
    <property type="match status" value="1"/>
</dbReference>
<dbReference type="SUPFAM" id="SSF51569">
    <property type="entry name" value="Aldolase"/>
    <property type="match status" value="1"/>
</dbReference>
<dbReference type="PROSITE" id="PS00815">
    <property type="entry name" value="AIPM_HOMOCIT_SYNTH_1"/>
    <property type="match status" value="1"/>
</dbReference>
<dbReference type="PROSITE" id="PS00816">
    <property type="entry name" value="AIPM_HOMOCIT_SYNTH_2"/>
    <property type="match status" value="1"/>
</dbReference>
<dbReference type="PROSITE" id="PS50991">
    <property type="entry name" value="PYR_CT"/>
    <property type="match status" value="1"/>
</dbReference>
<comment type="function">
    <text evidence="1">Catalyzes the condensation of the acetyl group of acetyl-CoA with 3-methyl-2-oxobutanoate (2-ketoisovalerate) to form 3-carboxy-3-hydroxy-4-methylpentanoate (2-isopropylmalate).</text>
</comment>
<comment type="catalytic activity">
    <reaction evidence="1">
        <text>3-methyl-2-oxobutanoate + acetyl-CoA + H2O = (2S)-2-isopropylmalate + CoA + H(+)</text>
        <dbReference type="Rhea" id="RHEA:21524"/>
        <dbReference type="ChEBI" id="CHEBI:1178"/>
        <dbReference type="ChEBI" id="CHEBI:11851"/>
        <dbReference type="ChEBI" id="CHEBI:15377"/>
        <dbReference type="ChEBI" id="CHEBI:15378"/>
        <dbReference type="ChEBI" id="CHEBI:57287"/>
        <dbReference type="ChEBI" id="CHEBI:57288"/>
        <dbReference type="EC" id="2.3.3.13"/>
    </reaction>
</comment>
<comment type="cofactor">
    <cofactor evidence="1">
        <name>Mn(2+)</name>
        <dbReference type="ChEBI" id="CHEBI:29035"/>
    </cofactor>
</comment>
<comment type="pathway">
    <text evidence="1">Amino-acid biosynthesis; L-leucine biosynthesis; L-leucine from 3-methyl-2-oxobutanoate: step 1/4.</text>
</comment>
<comment type="subunit">
    <text evidence="1">Homodimer.</text>
</comment>
<comment type="subcellular location">
    <subcellularLocation>
        <location evidence="1">Cytoplasm</location>
    </subcellularLocation>
</comment>
<comment type="similarity">
    <text evidence="1">Belongs to the alpha-IPM synthase/homocitrate synthase family. LeuA type 1 subfamily.</text>
</comment>
<protein>
    <recommendedName>
        <fullName evidence="1">2-isopropylmalate synthase</fullName>
        <ecNumber evidence="1">2.3.3.13</ecNumber>
    </recommendedName>
    <alternativeName>
        <fullName evidence="1">Alpha-IPM synthase</fullName>
    </alternativeName>
    <alternativeName>
        <fullName evidence="1">Alpha-isopropylmalate synthase</fullName>
    </alternativeName>
</protein>